<dbReference type="EMBL" id="AE000511">
    <property type="protein sequence ID" value="AAD08270.1"/>
    <property type="molecule type" value="Genomic_DNA"/>
</dbReference>
<dbReference type="PIR" id="A64673">
    <property type="entry name" value="A64673"/>
</dbReference>
<dbReference type="RefSeq" id="NP_208017.1">
    <property type="nucleotide sequence ID" value="NC_000915.1"/>
</dbReference>
<dbReference type="RefSeq" id="WP_001011988.1">
    <property type="nucleotide sequence ID" value="NC_018939.1"/>
</dbReference>
<dbReference type="SMR" id="O25823"/>
<dbReference type="FunCoup" id="O25823">
    <property type="interactions" value="164"/>
</dbReference>
<dbReference type="STRING" id="85962.HP_1225"/>
<dbReference type="PaxDb" id="85962-C694_06325"/>
<dbReference type="EnsemblBacteria" id="AAD08270">
    <property type="protein sequence ID" value="AAD08270"/>
    <property type="gene ID" value="HP_1225"/>
</dbReference>
<dbReference type="KEGG" id="heo:C694_06325"/>
<dbReference type="KEGG" id="hpy:HP_1225"/>
<dbReference type="PATRIC" id="fig|85962.47.peg.1313"/>
<dbReference type="eggNOG" id="COG0239">
    <property type="taxonomic scope" value="Bacteria"/>
</dbReference>
<dbReference type="InParanoid" id="O25823"/>
<dbReference type="OrthoDB" id="9806299at2"/>
<dbReference type="PhylomeDB" id="O25823"/>
<dbReference type="Proteomes" id="UP000000429">
    <property type="component" value="Chromosome"/>
</dbReference>
<dbReference type="GO" id="GO:0005886">
    <property type="term" value="C:plasma membrane"/>
    <property type="evidence" value="ECO:0000318"/>
    <property type="project" value="GO_Central"/>
</dbReference>
<dbReference type="GO" id="GO:0062054">
    <property type="term" value="F:fluoride channel activity"/>
    <property type="evidence" value="ECO:0007669"/>
    <property type="project" value="UniProtKB-UniRule"/>
</dbReference>
<dbReference type="GO" id="GO:1903425">
    <property type="term" value="F:fluoride transmembrane transporter activity"/>
    <property type="evidence" value="ECO:0000318"/>
    <property type="project" value="GO_Central"/>
</dbReference>
<dbReference type="GO" id="GO:0046872">
    <property type="term" value="F:metal ion binding"/>
    <property type="evidence" value="ECO:0007669"/>
    <property type="project" value="UniProtKB-KW"/>
</dbReference>
<dbReference type="GO" id="GO:0140114">
    <property type="term" value="P:cellular detoxification of fluoride"/>
    <property type="evidence" value="ECO:0007669"/>
    <property type="project" value="UniProtKB-UniRule"/>
</dbReference>
<dbReference type="GO" id="GO:1903424">
    <property type="term" value="P:fluoride transmembrane transport"/>
    <property type="evidence" value="ECO:0000318"/>
    <property type="project" value="GO_Central"/>
</dbReference>
<dbReference type="HAMAP" id="MF_00454">
    <property type="entry name" value="FluC"/>
    <property type="match status" value="1"/>
</dbReference>
<dbReference type="InterPro" id="IPR003691">
    <property type="entry name" value="FluC"/>
</dbReference>
<dbReference type="NCBIfam" id="TIGR00494">
    <property type="entry name" value="crcB"/>
    <property type="match status" value="1"/>
</dbReference>
<dbReference type="PANTHER" id="PTHR28259">
    <property type="entry name" value="FLUORIDE EXPORT PROTEIN 1-RELATED"/>
    <property type="match status" value="1"/>
</dbReference>
<dbReference type="PANTHER" id="PTHR28259:SF18">
    <property type="entry name" value="FLUORIDE-SPECIFIC ION CHANNEL FLUC"/>
    <property type="match status" value="1"/>
</dbReference>
<dbReference type="Pfam" id="PF02537">
    <property type="entry name" value="CRCB"/>
    <property type="match status" value="1"/>
</dbReference>
<keyword id="KW-0997">Cell inner membrane</keyword>
<keyword id="KW-1003">Cell membrane</keyword>
<keyword id="KW-0407">Ion channel</keyword>
<keyword id="KW-0406">Ion transport</keyword>
<keyword id="KW-0472">Membrane</keyword>
<keyword id="KW-0479">Metal-binding</keyword>
<keyword id="KW-1185">Reference proteome</keyword>
<keyword id="KW-0915">Sodium</keyword>
<keyword id="KW-0812">Transmembrane</keyword>
<keyword id="KW-1133">Transmembrane helix</keyword>
<keyword id="KW-0813">Transport</keyword>
<evidence type="ECO:0000255" key="1">
    <source>
        <dbReference type="HAMAP-Rule" id="MF_00454"/>
    </source>
</evidence>
<protein>
    <recommendedName>
        <fullName evidence="1">Fluoride-specific ion channel FluC</fullName>
    </recommendedName>
</protein>
<proteinExistence type="inferred from homology"/>
<sequence length="130" mass="14093">MNFVFLWAALGGAIGSSLRYFVGKMMPSKFLMFESFPLGTFSVNIIGCFVIGFMGHLAVKKVFGDDFGIFFVTGVLGGFTTFSSYGLDTLKLLQKSQYIEAVSYALGTNILGLTGVAIGWFLAKNFVGIH</sequence>
<feature type="chain" id="PRO_0000110109" description="Fluoride-specific ion channel FluC">
    <location>
        <begin position="1"/>
        <end position="130"/>
    </location>
</feature>
<feature type="transmembrane region" description="Helical" evidence="1">
    <location>
        <begin position="3"/>
        <end position="23"/>
    </location>
</feature>
<feature type="transmembrane region" description="Helical" evidence="1">
    <location>
        <begin position="39"/>
        <end position="59"/>
    </location>
</feature>
<feature type="transmembrane region" description="Helical" evidence="1">
    <location>
        <begin position="67"/>
        <end position="87"/>
    </location>
</feature>
<feature type="transmembrane region" description="Helical" evidence="1">
    <location>
        <begin position="102"/>
        <end position="122"/>
    </location>
</feature>
<feature type="binding site" evidence="1">
    <location>
        <position position="77"/>
    </location>
    <ligand>
        <name>Na(+)</name>
        <dbReference type="ChEBI" id="CHEBI:29101"/>
        <note>structural</note>
    </ligand>
</feature>
<feature type="binding site" evidence="1">
    <location>
        <position position="80"/>
    </location>
    <ligand>
        <name>Na(+)</name>
        <dbReference type="ChEBI" id="CHEBI:29101"/>
        <note>structural</note>
    </ligand>
</feature>
<accession>O25823</accession>
<comment type="function">
    <text evidence="1">Fluoride-specific ion channel. Important for reducing fluoride concentration in the cell, thus reducing its toxicity.</text>
</comment>
<comment type="catalytic activity">
    <reaction evidence="1">
        <text>fluoride(in) = fluoride(out)</text>
        <dbReference type="Rhea" id="RHEA:76159"/>
        <dbReference type="ChEBI" id="CHEBI:17051"/>
    </reaction>
    <physiologicalReaction direction="left-to-right" evidence="1">
        <dbReference type="Rhea" id="RHEA:76160"/>
    </physiologicalReaction>
</comment>
<comment type="activity regulation">
    <text evidence="1">Na(+) is not transported, but it plays an essential structural role and its presence is essential for fluoride channel function.</text>
</comment>
<comment type="subcellular location">
    <subcellularLocation>
        <location evidence="1">Cell inner membrane</location>
        <topology evidence="1">Multi-pass membrane protein</topology>
    </subcellularLocation>
</comment>
<comment type="similarity">
    <text evidence="1">Belongs to the fluoride channel Fluc/FEX (TC 1.A.43) family.</text>
</comment>
<name>FLUC_HELPY</name>
<gene>
    <name evidence="1" type="primary">fluC</name>
    <name evidence="1" type="synonym">crcB</name>
    <name type="ordered locus">HP_1225</name>
</gene>
<reference key="1">
    <citation type="journal article" date="1997" name="Nature">
        <title>The complete genome sequence of the gastric pathogen Helicobacter pylori.</title>
        <authorList>
            <person name="Tomb J.-F."/>
            <person name="White O."/>
            <person name="Kerlavage A.R."/>
            <person name="Clayton R.A."/>
            <person name="Sutton G.G."/>
            <person name="Fleischmann R.D."/>
            <person name="Ketchum K.A."/>
            <person name="Klenk H.-P."/>
            <person name="Gill S.R."/>
            <person name="Dougherty B.A."/>
            <person name="Nelson K.E."/>
            <person name="Quackenbush J."/>
            <person name="Zhou L."/>
            <person name="Kirkness E.F."/>
            <person name="Peterson S.N."/>
            <person name="Loftus B.J."/>
            <person name="Richardson D.L."/>
            <person name="Dodson R.J."/>
            <person name="Khalak H.G."/>
            <person name="Glodek A."/>
            <person name="McKenney K."/>
            <person name="FitzGerald L.M."/>
            <person name="Lee N."/>
            <person name="Adams M.D."/>
            <person name="Hickey E.K."/>
            <person name="Berg D.E."/>
            <person name="Gocayne J.D."/>
            <person name="Utterback T.R."/>
            <person name="Peterson J.D."/>
            <person name="Kelley J.M."/>
            <person name="Cotton M.D."/>
            <person name="Weidman J.F."/>
            <person name="Fujii C."/>
            <person name="Bowman C."/>
            <person name="Watthey L."/>
            <person name="Wallin E."/>
            <person name="Hayes W.S."/>
            <person name="Borodovsky M."/>
            <person name="Karp P.D."/>
            <person name="Smith H.O."/>
            <person name="Fraser C.M."/>
            <person name="Venter J.C."/>
        </authorList>
    </citation>
    <scope>NUCLEOTIDE SEQUENCE [LARGE SCALE GENOMIC DNA]</scope>
    <source>
        <strain>ATCC 700392 / 26695</strain>
    </source>
</reference>
<organism>
    <name type="scientific">Helicobacter pylori (strain ATCC 700392 / 26695)</name>
    <name type="common">Campylobacter pylori</name>
    <dbReference type="NCBI Taxonomy" id="85962"/>
    <lineage>
        <taxon>Bacteria</taxon>
        <taxon>Pseudomonadati</taxon>
        <taxon>Campylobacterota</taxon>
        <taxon>Epsilonproteobacteria</taxon>
        <taxon>Campylobacterales</taxon>
        <taxon>Helicobacteraceae</taxon>
        <taxon>Helicobacter</taxon>
    </lineage>
</organism>